<keyword id="KW-1185">Reference proteome</keyword>
<accession>Q02406</accession>
<name>Y12J_BPT4</name>
<reference key="1">
    <citation type="journal article" date="1992" name="DNA Seq.">
        <title>The nucleotide sequence between genes 31 and 30 of bacteriophage T4.</title>
        <authorList>
            <person name="Nivinskas R."/>
            <person name="Zajanckauskaite A."/>
            <person name="Raudonikiene A."/>
            <person name="Viteniene I."/>
        </authorList>
    </citation>
    <scope>NUCLEOTIDE SEQUENCE [GENOMIC DNA]</scope>
</reference>
<reference key="2">
    <citation type="journal article" date="2003" name="Microbiol. Mol. Biol. Rev.">
        <title>Bacteriophage T4 genome.</title>
        <authorList>
            <person name="Miller E.S."/>
            <person name="Kutter E."/>
            <person name="Mosig G."/>
            <person name="Arisaka F."/>
            <person name="Kunisawa T."/>
            <person name="Ruger W."/>
        </authorList>
    </citation>
    <scope>NUCLEOTIDE SEQUENCE [LARGE SCALE GENOMIC DNA]</scope>
</reference>
<feature type="chain" id="PRO_0000165170" description="Uncharacterized 7.3 kDa protein in Gp30-rIII intergenic region">
    <location>
        <begin position="1"/>
        <end position="65"/>
    </location>
</feature>
<dbReference type="EMBL" id="X60109">
    <property type="protein sequence ID" value="CAA42705.1"/>
    <property type="molecule type" value="Genomic_DNA"/>
</dbReference>
<dbReference type="EMBL" id="AF158101">
    <property type="protein sequence ID" value="AAD42446.1"/>
    <property type="molecule type" value="Genomic_DNA"/>
</dbReference>
<dbReference type="PIR" id="S27147">
    <property type="entry name" value="S27147"/>
</dbReference>
<dbReference type="RefSeq" id="NP_049819.1">
    <property type="nucleotide sequence ID" value="NC_000866.4"/>
</dbReference>
<dbReference type="SMR" id="Q02406"/>
<dbReference type="GeneID" id="1258766"/>
<dbReference type="KEGG" id="vg:1258766"/>
<dbReference type="OrthoDB" id="23778at10239"/>
<dbReference type="Proteomes" id="UP000009087">
    <property type="component" value="Segment"/>
</dbReference>
<organismHost>
    <name type="scientific">Escherichia coli</name>
    <dbReference type="NCBI Taxonomy" id="562"/>
</organismHost>
<sequence>MKFFLGQTVELKGVGIPGLISKVLPPFKWSGIQIKEAYIVSWVDGNEDLRMGDELSPIYGLKELV</sequence>
<organism>
    <name type="scientific">Enterobacteria phage T4</name>
    <name type="common">Bacteriophage T4</name>
    <dbReference type="NCBI Taxonomy" id="10665"/>
    <lineage>
        <taxon>Viruses</taxon>
        <taxon>Duplodnaviria</taxon>
        <taxon>Heunggongvirae</taxon>
        <taxon>Uroviricota</taxon>
        <taxon>Caudoviricetes</taxon>
        <taxon>Straboviridae</taxon>
        <taxon>Tevenvirinae</taxon>
        <taxon>Tequatrovirus</taxon>
    </lineage>
</organism>
<protein>
    <recommendedName>
        <fullName>Uncharacterized 7.3 kDa protein in Gp30-rIII intergenic region</fullName>
    </recommendedName>
</protein>
<gene>
    <name type="primary">y12J</name>
    <name type="synonym">30.5</name>
</gene>
<proteinExistence type="predicted"/>